<evidence type="ECO:0000305" key="1"/>
<proteinExistence type="inferred from homology"/>
<feature type="chain" id="PRO_0000299294" description="UPF0473 protein SAS1551">
    <location>
        <begin position="1"/>
        <end position="102"/>
    </location>
</feature>
<name>Y1551_STAAS</name>
<gene>
    <name type="ordered locus">SAS1551</name>
</gene>
<comment type="similarity">
    <text evidence="1">Belongs to the UPF0473 family.</text>
</comment>
<accession>Q6G8V4</accession>
<dbReference type="EMBL" id="BX571857">
    <property type="protein sequence ID" value="CAG43352.1"/>
    <property type="molecule type" value="Genomic_DNA"/>
</dbReference>
<dbReference type="RefSeq" id="WP_000134779.1">
    <property type="nucleotide sequence ID" value="NC_002953.3"/>
</dbReference>
<dbReference type="KEGG" id="sas:SAS1551"/>
<dbReference type="HOGENOM" id="CLU_146610_2_1_9"/>
<dbReference type="HAMAP" id="MF_01448">
    <property type="entry name" value="UPF0473"/>
    <property type="match status" value="1"/>
</dbReference>
<dbReference type="InterPro" id="IPR009711">
    <property type="entry name" value="UPF0473"/>
</dbReference>
<dbReference type="NCBIfam" id="NF010214">
    <property type="entry name" value="PRK13678.1-1"/>
    <property type="match status" value="1"/>
</dbReference>
<dbReference type="PANTHER" id="PTHR40066">
    <property type="entry name" value="UPF0473 PROTEIN CBO2561/CLC_2432"/>
    <property type="match status" value="1"/>
</dbReference>
<dbReference type="PANTHER" id="PTHR40066:SF1">
    <property type="entry name" value="UPF0473 PROTEIN CBO2561_CLC_2432"/>
    <property type="match status" value="1"/>
</dbReference>
<dbReference type="Pfam" id="PF06949">
    <property type="entry name" value="DUF1292"/>
    <property type="match status" value="1"/>
</dbReference>
<organism>
    <name type="scientific">Staphylococcus aureus (strain MSSA476)</name>
    <dbReference type="NCBI Taxonomy" id="282459"/>
    <lineage>
        <taxon>Bacteria</taxon>
        <taxon>Bacillati</taxon>
        <taxon>Bacillota</taxon>
        <taxon>Bacilli</taxon>
        <taxon>Bacillales</taxon>
        <taxon>Staphylococcaceae</taxon>
        <taxon>Staphylococcus</taxon>
    </lineage>
</organism>
<protein>
    <recommendedName>
        <fullName>UPF0473 protein SAS1551</fullName>
    </recommendedName>
</protein>
<reference key="1">
    <citation type="journal article" date="2004" name="Proc. Natl. Acad. Sci. U.S.A.">
        <title>Complete genomes of two clinical Staphylococcus aureus strains: evidence for the rapid evolution of virulence and drug resistance.</title>
        <authorList>
            <person name="Holden M.T.G."/>
            <person name="Feil E.J."/>
            <person name="Lindsay J.A."/>
            <person name="Peacock S.J."/>
            <person name="Day N.P.J."/>
            <person name="Enright M.C."/>
            <person name="Foster T.J."/>
            <person name="Moore C.E."/>
            <person name="Hurst L."/>
            <person name="Atkin R."/>
            <person name="Barron A."/>
            <person name="Bason N."/>
            <person name="Bentley S.D."/>
            <person name="Chillingworth C."/>
            <person name="Chillingworth T."/>
            <person name="Churcher C."/>
            <person name="Clark L."/>
            <person name="Corton C."/>
            <person name="Cronin A."/>
            <person name="Doggett J."/>
            <person name="Dowd L."/>
            <person name="Feltwell T."/>
            <person name="Hance Z."/>
            <person name="Harris B."/>
            <person name="Hauser H."/>
            <person name="Holroyd S."/>
            <person name="Jagels K."/>
            <person name="James K.D."/>
            <person name="Lennard N."/>
            <person name="Line A."/>
            <person name="Mayes R."/>
            <person name="Moule S."/>
            <person name="Mungall K."/>
            <person name="Ormond D."/>
            <person name="Quail M.A."/>
            <person name="Rabbinowitsch E."/>
            <person name="Rutherford K.M."/>
            <person name="Sanders M."/>
            <person name="Sharp S."/>
            <person name="Simmonds M."/>
            <person name="Stevens K."/>
            <person name="Whitehead S."/>
            <person name="Barrell B.G."/>
            <person name="Spratt B.G."/>
            <person name="Parkhill J."/>
        </authorList>
    </citation>
    <scope>NUCLEOTIDE SEQUENCE [LARGE SCALE GENOMIC DNA]</scope>
    <source>
        <strain>MSSA476</strain>
    </source>
</reference>
<sequence length="102" mass="11949">MTEHNHDSQLEINNEEELLTLFDEEGNEVLYRKVLEFYHPEFKKEYVILAEEGAQSDEDDMIELVPMINEPDESGDGGKLVPIETDEEWDMIEEVVNTEMEE</sequence>